<dbReference type="EC" id="3.2.1.-"/>
<dbReference type="EC" id="3.4.-.-"/>
<dbReference type="EMBL" id="X99260">
    <property type="protein sequence ID" value="CAA67661.1"/>
    <property type="molecule type" value="Genomic_DNA"/>
</dbReference>
<dbReference type="RefSeq" id="NP_690647.1">
    <property type="nucleotide sequence ID" value="NC_004165.1"/>
</dbReference>
<dbReference type="SMR" id="Q37894"/>
<dbReference type="MEROPS" id="M23.008"/>
<dbReference type="KEGG" id="vg:955363"/>
<dbReference type="Proteomes" id="UP000000971">
    <property type="component" value="Segment"/>
</dbReference>
<dbReference type="GO" id="GO:0044423">
    <property type="term" value="C:virion component"/>
    <property type="evidence" value="ECO:0007669"/>
    <property type="project" value="UniProtKB-KW"/>
</dbReference>
<dbReference type="GO" id="GO:0016798">
    <property type="term" value="F:hydrolase activity, acting on glycosyl bonds"/>
    <property type="evidence" value="ECO:0007669"/>
    <property type="project" value="UniProtKB-KW"/>
</dbReference>
<dbReference type="GO" id="GO:0046872">
    <property type="term" value="F:metal ion binding"/>
    <property type="evidence" value="ECO:0007669"/>
    <property type="project" value="UniProtKB-KW"/>
</dbReference>
<dbReference type="GO" id="GO:0008237">
    <property type="term" value="F:metallopeptidase activity"/>
    <property type="evidence" value="ECO:0007669"/>
    <property type="project" value="UniProtKB-KW"/>
</dbReference>
<dbReference type="GO" id="GO:0071555">
    <property type="term" value="P:cell wall organization"/>
    <property type="evidence" value="ECO:0007669"/>
    <property type="project" value="UniProtKB-KW"/>
</dbReference>
<dbReference type="GO" id="GO:0042742">
    <property type="term" value="P:defense response to bacterium"/>
    <property type="evidence" value="ECO:0007669"/>
    <property type="project" value="UniProtKB-KW"/>
</dbReference>
<dbReference type="GO" id="GO:0031640">
    <property type="term" value="P:killing of cells of another organism"/>
    <property type="evidence" value="ECO:0007669"/>
    <property type="project" value="UniProtKB-KW"/>
</dbReference>
<dbReference type="GO" id="GO:0006508">
    <property type="term" value="P:proteolysis"/>
    <property type="evidence" value="ECO:0007669"/>
    <property type="project" value="UniProtKB-KW"/>
</dbReference>
<dbReference type="CDD" id="cd12797">
    <property type="entry name" value="M23_peptidase"/>
    <property type="match status" value="1"/>
</dbReference>
<dbReference type="Gene3D" id="1.10.530.10">
    <property type="match status" value="1"/>
</dbReference>
<dbReference type="Gene3D" id="2.70.70.10">
    <property type="entry name" value="Glucose Permease (Domain IIA)"/>
    <property type="match status" value="1"/>
</dbReference>
<dbReference type="InterPro" id="IPR011055">
    <property type="entry name" value="Dup_hybrid_motif"/>
</dbReference>
<dbReference type="InterPro" id="IPR041219">
    <property type="entry name" value="Phage_lysozyme2"/>
</dbReference>
<dbReference type="Pfam" id="PF18013">
    <property type="entry name" value="Phage_lysozyme2"/>
    <property type="match status" value="1"/>
</dbReference>
<dbReference type="SUPFAM" id="SSF51261">
    <property type="entry name" value="Duplicated hybrid motif"/>
    <property type="match status" value="1"/>
</dbReference>
<name>VG13_BPB03</name>
<reference key="1">
    <citation type="journal article" date="1997" name="Gene">
        <title>Bacteriophage B103: complete DNA sequence of its genome and relationship to other Bacillus phages.</title>
        <authorList>
            <person name="Pecenkova T."/>
            <person name="Benes V."/>
            <person name="Paces J."/>
            <person name="Vlcek C."/>
            <person name="Paces V."/>
        </authorList>
    </citation>
    <scope>NUCLEOTIDE SEQUENCE [LARGE SCALE GENOMIC DNA]</scope>
</reference>
<keyword id="KW-0929">Antimicrobial</keyword>
<keyword id="KW-0081">Bacteriolytic enzyme</keyword>
<keyword id="KW-0961">Cell wall biogenesis/degradation</keyword>
<keyword id="KW-0326">Glycosidase</keyword>
<keyword id="KW-0378">Hydrolase</keyword>
<keyword id="KW-0426">Late protein</keyword>
<keyword id="KW-0479">Metal-binding</keyword>
<keyword id="KW-0482">Metalloprotease</keyword>
<keyword id="KW-0511">Multifunctional enzyme</keyword>
<keyword id="KW-0645">Protease</keyword>
<keyword id="KW-0946">Virion</keyword>
<keyword id="KW-0862">Zinc</keyword>
<proteinExistence type="inferred from homology"/>
<organism>
    <name type="scientific">Bacillus phage B103</name>
    <name type="common">Bacteriophage B103</name>
    <dbReference type="NCBI Taxonomy" id="2994042"/>
    <lineage>
        <taxon>Viruses</taxon>
        <taxon>Duplodnaviria</taxon>
        <taxon>Heunggongvirae</taxon>
        <taxon>Uroviricota</taxon>
        <taxon>Caudoviricetes</taxon>
        <taxon>Salasmaviridae</taxon>
        <taxon>Picovirinae</taxon>
        <taxon>Beecentumtrevirus</taxon>
        <taxon>Beecentumtrevirus B103</taxon>
    </lineage>
</organism>
<organismHost>
    <name type="scientific">Bacillus subtilis</name>
    <dbReference type="NCBI Taxonomy" id="1423"/>
</organismHost>
<sequence>MFYSKNAYLSMKEMTVNAQYILNYLLPRGWTKNAICGMLGNMQTESTINPGIWQNLDEGNTSLGFGLVQWTPATKYLNWADRNGLKRDHMDSQLKRILWEVDNNEQWINLRNMTFKEFTKSTKSANELAMIFLASYERPANPNQPERGTQAEYWFKTLTGKGSTGIQLAQFPMDIINITQGENGSFSHKGTLCIDFVGKHEKYPYYAPCDCTCVWRGDESAYLAWTSDKEVMCADGTVRYITWVCVHDENLLYNVGKKLKKGELMGHSGKGGRATGDHLHLNVIEGNKYQGWVKKPDSALAGTELHIYDVFAVNGVEIVNGLGYDWKTSDWVDGSDENNGDDKDKDKDETKNIVNLLLCGALNGW</sequence>
<evidence type="ECO:0000250" key="1"/>
<evidence type="ECO:0000305" key="2"/>
<feature type="chain" id="PRO_0000106594" description="Morphogenesis protein 1">
    <location>
        <begin position="1"/>
        <end position="365"/>
    </location>
</feature>
<feature type="region of interest" description="Lysozyme-like glycosidase" evidence="1">
    <location>
        <begin position="1"/>
        <end position="159"/>
    </location>
</feature>
<feature type="region of interest" description="Linker" evidence="1">
    <location>
        <begin position="160"/>
        <end position="165"/>
    </location>
</feature>
<feature type="region of interest" description="Probable metalloendopeptidase" evidence="1">
    <location>
        <begin position="166"/>
        <end position="365"/>
    </location>
</feature>
<feature type="active site" description="For lysozyme-like glycosidase activity" evidence="1">
    <location>
        <position position="45"/>
    </location>
</feature>
<feature type="binding site" evidence="1">
    <location>
        <begin position="137"/>
        <end position="140"/>
    </location>
    <ligand>
        <name>substrate</name>
    </ligand>
</feature>
<feature type="binding site" evidence="1">
    <location>
        <position position="188"/>
    </location>
    <ligand>
        <name>Zn(2+)</name>
        <dbReference type="ChEBI" id="CHEBI:29105"/>
    </ligand>
</feature>
<feature type="binding site" evidence="1">
    <location>
        <position position="195"/>
    </location>
    <ligand>
        <name>Zn(2+)</name>
        <dbReference type="ChEBI" id="CHEBI:29105"/>
    </ligand>
</feature>
<feature type="binding site" evidence="1">
    <location>
        <position position="280"/>
    </location>
    <ligand>
        <name>Zn(2+)</name>
        <dbReference type="ChEBI" id="CHEBI:29105"/>
    </ligand>
</feature>
<comment type="function">
    <text evidence="1">Essential for tail assembly and the production of infectious particles (By similarity). Degrades the peptidoglycan layer of the host cell wall and thereby facilitates infection of host bacteria. Acts probably as multifunctional enzyme that degrades N-acetylglucosamine polymers (in vitro) and cleaves the peptide cross-links of the host cell wall (By similarity).</text>
</comment>
<comment type="cofactor">
    <cofactor evidence="1">
        <name>Zn(2+)</name>
        <dbReference type="ChEBI" id="CHEBI:29105"/>
    </cofactor>
    <text evidence="1">Binds 1 zinc ion per subunit.</text>
</comment>
<comment type="subcellular location">
    <subcellularLocation>
        <location evidence="1">Virion</location>
    </subcellularLocation>
    <text evidence="1">Located at the end of the tail structure.</text>
</comment>
<comment type="similarity">
    <text evidence="2">In the N-terminal section; belongs to the glycosyl hydrolase 24 family.</text>
</comment>
<comment type="similarity">
    <text evidence="2">In the C-terminal section; belongs to the peptidase M23B family.</text>
</comment>
<accession>Q37894</accession>
<protein>
    <recommendedName>
        <fullName>Morphogenesis protein 1</fullName>
    </recommendedName>
    <alternativeName>
        <fullName>Late protein GP13</fullName>
    </alternativeName>
    <domain>
        <recommendedName>
            <fullName>Lysozyme-like glycosidase</fullName>
            <ecNumber>3.2.1.-</ecNumber>
        </recommendedName>
    </domain>
    <domain>
        <recommendedName>
            <fullName>Probable metalloendopeptidase</fullName>
            <ecNumber>3.4.-.-</ecNumber>
        </recommendedName>
    </domain>
</protein>
<gene>
    <name type="primary">13</name>
</gene>